<accession>B4SH93</accession>
<organism>
    <name type="scientific">Pelodictyon phaeoclathratiforme (strain DSM 5477 / BU-1)</name>
    <dbReference type="NCBI Taxonomy" id="324925"/>
    <lineage>
        <taxon>Bacteria</taxon>
        <taxon>Pseudomonadati</taxon>
        <taxon>Chlorobiota</taxon>
        <taxon>Chlorobiia</taxon>
        <taxon>Chlorobiales</taxon>
        <taxon>Chlorobiaceae</taxon>
        <taxon>Chlorobium/Pelodictyon group</taxon>
        <taxon>Pelodictyon</taxon>
    </lineage>
</organism>
<dbReference type="EC" id="2.7.8.26" evidence="1"/>
<dbReference type="EMBL" id="CP001110">
    <property type="protein sequence ID" value="ACF43560.1"/>
    <property type="molecule type" value="Genomic_DNA"/>
</dbReference>
<dbReference type="RefSeq" id="WP_012508051.1">
    <property type="nucleotide sequence ID" value="NC_011060.1"/>
</dbReference>
<dbReference type="STRING" id="324925.Ppha_1295"/>
<dbReference type="KEGG" id="pph:Ppha_1295"/>
<dbReference type="eggNOG" id="COG0368">
    <property type="taxonomic scope" value="Bacteria"/>
</dbReference>
<dbReference type="HOGENOM" id="CLU_057426_1_0_10"/>
<dbReference type="OrthoDB" id="9794626at2"/>
<dbReference type="UniPathway" id="UPA00148">
    <property type="reaction ID" value="UER00238"/>
</dbReference>
<dbReference type="Proteomes" id="UP000002724">
    <property type="component" value="Chromosome"/>
</dbReference>
<dbReference type="GO" id="GO:0005886">
    <property type="term" value="C:plasma membrane"/>
    <property type="evidence" value="ECO:0007669"/>
    <property type="project" value="UniProtKB-SubCell"/>
</dbReference>
<dbReference type="GO" id="GO:0051073">
    <property type="term" value="F:adenosylcobinamide-GDP ribazoletransferase activity"/>
    <property type="evidence" value="ECO:0007669"/>
    <property type="project" value="UniProtKB-UniRule"/>
</dbReference>
<dbReference type="GO" id="GO:0008818">
    <property type="term" value="F:cobalamin 5'-phosphate synthase activity"/>
    <property type="evidence" value="ECO:0007669"/>
    <property type="project" value="UniProtKB-UniRule"/>
</dbReference>
<dbReference type="GO" id="GO:0009236">
    <property type="term" value="P:cobalamin biosynthetic process"/>
    <property type="evidence" value="ECO:0007669"/>
    <property type="project" value="UniProtKB-UniRule"/>
</dbReference>
<dbReference type="HAMAP" id="MF_00719">
    <property type="entry name" value="CobS"/>
    <property type="match status" value="1"/>
</dbReference>
<dbReference type="InterPro" id="IPR003805">
    <property type="entry name" value="CobS"/>
</dbReference>
<dbReference type="NCBIfam" id="TIGR00317">
    <property type="entry name" value="cobS"/>
    <property type="match status" value="1"/>
</dbReference>
<dbReference type="PANTHER" id="PTHR34148">
    <property type="entry name" value="ADENOSYLCOBINAMIDE-GDP RIBAZOLETRANSFERASE"/>
    <property type="match status" value="1"/>
</dbReference>
<dbReference type="PANTHER" id="PTHR34148:SF1">
    <property type="entry name" value="ADENOSYLCOBINAMIDE-GDP RIBAZOLETRANSFERASE"/>
    <property type="match status" value="1"/>
</dbReference>
<dbReference type="Pfam" id="PF02654">
    <property type="entry name" value="CobS"/>
    <property type="match status" value="1"/>
</dbReference>
<keyword id="KW-0997">Cell inner membrane</keyword>
<keyword id="KW-1003">Cell membrane</keyword>
<keyword id="KW-0169">Cobalamin biosynthesis</keyword>
<keyword id="KW-0460">Magnesium</keyword>
<keyword id="KW-0472">Membrane</keyword>
<keyword id="KW-1185">Reference proteome</keyword>
<keyword id="KW-0808">Transferase</keyword>
<keyword id="KW-0812">Transmembrane</keyword>
<keyword id="KW-1133">Transmembrane helix</keyword>
<gene>
    <name evidence="1" type="primary">cobS</name>
    <name type="ordered locus">Ppha_1295</name>
</gene>
<name>COBS_PELPB</name>
<comment type="function">
    <text evidence="1">Joins adenosylcobinamide-GDP and alpha-ribazole to generate adenosylcobalamin (Ado-cobalamin). Also synthesizes adenosylcobalamin 5'-phosphate from adenosylcobinamide-GDP and alpha-ribazole 5'-phosphate.</text>
</comment>
<comment type="catalytic activity">
    <reaction evidence="1">
        <text>alpha-ribazole + adenosylcob(III)inamide-GDP = adenosylcob(III)alamin + GMP + H(+)</text>
        <dbReference type="Rhea" id="RHEA:16049"/>
        <dbReference type="ChEBI" id="CHEBI:10329"/>
        <dbReference type="ChEBI" id="CHEBI:15378"/>
        <dbReference type="ChEBI" id="CHEBI:18408"/>
        <dbReference type="ChEBI" id="CHEBI:58115"/>
        <dbReference type="ChEBI" id="CHEBI:60487"/>
        <dbReference type="EC" id="2.7.8.26"/>
    </reaction>
</comment>
<comment type="catalytic activity">
    <reaction evidence="1">
        <text>alpha-ribazole 5'-phosphate + adenosylcob(III)inamide-GDP = adenosylcob(III)alamin 5'-phosphate + GMP + H(+)</text>
        <dbReference type="Rhea" id="RHEA:23560"/>
        <dbReference type="ChEBI" id="CHEBI:15378"/>
        <dbReference type="ChEBI" id="CHEBI:57918"/>
        <dbReference type="ChEBI" id="CHEBI:58115"/>
        <dbReference type="ChEBI" id="CHEBI:60487"/>
        <dbReference type="ChEBI" id="CHEBI:60493"/>
        <dbReference type="EC" id="2.7.8.26"/>
    </reaction>
</comment>
<comment type="cofactor">
    <cofactor evidence="1">
        <name>Mg(2+)</name>
        <dbReference type="ChEBI" id="CHEBI:18420"/>
    </cofactor>
</comment>
<comment type="pathway">
    <text evidence="1">Cofactor biosynthesis; adenosylcobalamin biosynthesis; adenosylcobalamin from cob(II)yrinate a,c-diamide: step 7/7.</text>
</comment>
<comment type="subcellular location">
    <subcellularLocation>
        <location evidence="1">Cell inner membrane</location>
        <topology evidence="1">Multi-pass membrane protein</topology>
    </subcellularLocation>
</comment>
<comment type="similarity">
    <text evidence="1">Belongs to the CobS family.</text>
</comment>
<evidence type="ECO:0000255" key="1">
    <source>
        <dbReference type="HAMAP-Rule" id="MF_00719"/>
    </source>
</evidence>
<sequence>MLSGLVTALRTLTLFPVPGKETDTFSRSLFWFPVVGLLLGSIQAALGYFTSLLGWNELSAAFVVLGGIALTRGMHADGLADLADGFWGGRTRESALRIMKDPNVGSFGAIALSGMMLLKWIAILKLVDIGAFACIAAGVLLARWVQVLLASALPYARREGGTAQSFVSGAGVVHIVVTSALTLLFLFPLLHADLYANLYAVVAMISAALAAALLTGLLSYRKIGGVTGDVLGAGSEVTELFVWIAAALSAALKA</sequence>
<proteinExistence type="inferred from homology"/>
<feature type="chain" id="PRO_1000132591" description="Adenosylcobinamide-GDP ribazoletransferase">
    <location>
        <begin position="1"/>
        <end position="254"/>
    </location>
</feature>
<feature type="transmembrane region" description="Helical" evidence="1">
    <location>
        <begin position="29"/>
        <end position="49"/>
    </location>
</feature>
<feature type="transmembrane region" description="Helical" evidence="1">
    <location>
        <begin position="50"/>
        <end position="70"/>
    </location>
</feature>
<feature type="transmembrane region" description="Helical" evidence="1">
    <location>
        <begin position="98"/>
        <end position="118"/>
    </location>
</feature>
<feature type="transmembrane region" description="Helical" evidence="1">
    <location>
        <begin position="121"/>
        <end position="141"/>
    </location>
</feature>
<feature type="transmembrane region" description="Helical" evidence="1">
    <location>
        <begin position="170"/>
        <end position="190"/>
    </location>
</feature>
<feature type="transmembrane region" description="Helical" evidence="1">
    <location>
        <begin position="198"/>
        <end position="218"/>
    </location>
</feature>
<feature type="transmembrane region" description="Helical" evidence="1">
    <location>
        <begin position="230"/>
        <end position="250"/>
    </location>
</feature>
<protein>
    <recommendedName>
        <fullName evidence="1">Adenosylcobinamide-GDP ribazoletransferase</fullName>
        <ecNumber evidence="1">2.7.8.26</ecNumber>
    </recommendedName>
    <alternativeName>
        <fullName evidence="1">Cobalamin synthase</fullName>
    </alternativeName>
    <alternativeName>
        <fullName evidence="1">Cobalamin-5'-phosphate synthase</fullName>
    </alternativeName>
</protein>
<reference key="1">
    <citation type="submission" date="2008-06" db="EMBL/GenBank/DDBJ databases">
        <title>Complete sequence of Pelodictyon phaeoclathratiforme BU-1.</title>
        <authorList>
            <consortium name="US DOE Joint Genome Institute"/>
            <person name="Lucas S."/>
            <person name="Copeland A."/>
            <person name="Lapidus A."/>
            <person name="Glavina del Rio T."/>
            <person name="Dalin E."/>
            <person name="Tice H."/>
            <person name="Bruce D."/>
            <person name="Goodwin L."/>
            <person name="Pitluck S."/>
            <person name="Schmutz J."/>
            <person name="Larimer F."/>
            <person name="Land M."/>
            <person name="Hauser L."/>
            <person name="Kyrpides N."/>
            <person name="Mikhailova N."/>
            <person name="Liu Z."/>
            <person name="Li T."/>
            <person name="Zhao F."/>
            <person name="Overmann J."/>
            <person name="Bryant D.A."/>
            <person name="Richardson P."/>
        </authorList>
    </citation>
    <scope>NUCLEOTIDE SEQUENCE [LARGE SCALE GENOMIC DNA]</scope>
    <source>
        <strain>DSM 5477 / BU-1</strain>
    </source>
</reference>